<name>RN150_MOUSE</name>
<dbReference type="EMBL" id="AK220374">
    <property type="protein sequence ID" value="BAD90433.1"/>
    <property type="status" value="ALT_INIT"/>
    <property type="molecule type" value="mRNA"/>
</dbReference>
<dbReference type="EMBL" id="AK041412">
    <property type="status" value="NOT_ANNOTATED_CDS"/>
    <property type="molecule type" value="mRNA"/>
</dbReference>
<dbReference type="EMBL" id="AC124757">
    <property type="status" value="NOT_ANNOTATED_CDS"/>
    <property type="molecule type" value="Genomic_DNA"/>
</dbReference>
<dbReference type="EMBL" id="AC132372">
    <property type="status" value="NOT_ANNOTATED_CDS"/>
    <property type="molecule type" value="Genomic_DNA"/>
</dbReference>
<dbReference type="EMBL" id="AC166939">
    <property type="status" value="NOT_ANNOTATED_CDS"/>
    <property type="molecule type" value="Genomic_DNA"/>
</dbReference>
<dbReference type="CCDS" id="CCDS40402.1">
    <molecule id="Q5DTZ6-1"/>
</dbReference>
<dbReference type="RefSeq" id="NP_796352.2">
    <molecule id="Q5DTZ6-1"/>
    <property type="nucleotide sequence ID" value="NM_177378.4"/>
</dbReference>
<dbReference type="RefSeq" id="XP_030099483.1">
    <molecule id="Q5DTZ6-2"/>
    <property type="nucleotide sequence ID" value="XM_030243623.2"/>
</dbReference>
<dbReference type="SMR" id="Q5DTZ6"/>
<dbReference type="FunCoup" id="Q5DTZ6">
    <property type="interactions" value="781"/>
</dbReference>
<dbReference type="STRING" id="10090.ENSMUSP00000077610"/>
<dbReference type="GlyCosmos" id="Q5DTZ6">
    <property type="glycosylation" value="4 sites, No reported glycans"/>
</dbReference>
<dbReference type="GlyGen" id="Q5DTZ6">
    <property type="glycosylation" value="4 sites"/>
</dbReference>
<dbReference type="PhosphoSitePlus" id="Q5DTZ6"/>
<dbReference type="PaxDb" id="10090-ENSMUSP00000077610"/>
<dbReference type="ProteomicsDB" id="299918">
    <molecule id="Q5DTZ6-1"/>
</dbReference>
<dbReference type="ProteomicsDB" id="299919">
    <molecule id="Q5DTZ6-2"/>
</dbReference>
<dbReference type="ProteomicsDB" id="299920">
    <molecule id="Q5DTZ6-3"/>
</dbReference>
<dbReference type="Antibodypedia" id="27282">
    <property type="antibodies" value="149 antibodies from 21 providers"/>
</dbReference>
<dbReference type="DNASU" id="330812"/>
<dbReference type="Ensembl" id="ENSMUST00000078525.7">
    <molecule id="Q5DTZ6-1"/>
    <property type="protein sequence ID" value="ENSMUSP00000077610.6"/>
    <property type="gene ID" value="ENSMUSG00000047747.11"/>
</dbReference>
<dbReference type="GeneID" id="330812"/>
<dbReference type="KEGG" id="mmu:330812"/>
<dbReference type="UCSC" id="uc009mjt.2">
    <molecule id="Q5DTZ6-1"/>
    <property type="organism name" value="mouse"/>
</dbReference>
<dbReference type="UCSC" id="uc029wub.2">
    <molecule id="Q5DTZ6-3"/>
    <property type="organism name" value="mouse"/>
</dbReference>
<dbReference type="AGR" id="MGI:2443860"/>
<dbReference type="CTD" id="57484"/>
<dbReference type="MGI" id="MGI:2443860">
    <property type="gene designation" value="Rnf150"/>
</dbReference>
<dbReference type="VEuPathDB" id="HostDB:ENSMUSG00000047747"/>
<dbReference type="eggNOG" id="KOG0800">
    <property type="taxonomic scope" value="Eukaryota"/>
</dbReference>
<dbReference type="GeneTree" id="ENSGT00940000156171"/>
<dbReference type="HOGENOM" id="CLU_049885_2_1_1"/>
<dbReference type="InParanoid" id="Q5DTZ6"/>
<dbReference type="OMA" id="VNITYMD"/>
<dbReference type="OrthoDB" id="5357315at2759"/>
<dbReference type="PhylomeDB" id="Q5DTZ6"/>
<dbReference type="TreeFam" id="TF317486"/>
<dbReference type="BioGRID-ORCS" id="330812">
    <property type="hits" value="2 hits in 79 CRISPR screens"/>
</dbReference>
<dbReference type="ChiTaRS" id="Rnf150">
    <property type="organism name" value="mouse"/>
</dbReference>
<dbReference type="PRO" id="PR:Q5DTZ6"/>
<dbReference type="Proteomes" id="UP000000589">
    <property type="component" value="Chromosome 8"/>
</dbReference>
<dbReference type="RNAct" id="Q5DTZ6">
    <property type="molecule type" value="protein"/>
</dbReference>
<dbReference type="Bgee" id="ENSMUSG00000047747">
    <property type="expression patterns" value="Expressed in pigmented layer of retina and 196 other cell types or tissues"/>
</dbReference>
<dbReference type="GO" id="GO:0016020">
    <property type="term" value="C:membrane"/>
    <property type="evidence" value="ECO:0007669"/>
    <property type="project" value="UniProtKB-SubCell"/>
</dbReference>
<dbReference type="GO" id="GO:0008270">
    <property type="term" value="F:zinc ion binding"/>
    <property type="evidence" value="ECO:0007669"/>
    <property type="project" value="UniProtKB-KW"/>
</dbReference>
<dbReference type="CDD" id="cd02122">
    <property type="entry name" value="PA_GRAIL_like"/>
    <property type="match status" value="1"/>
</dbReference>
<dbReference type="CDD" id="cd16805">
    <property type="entry name" value="RING-H2_RNF150"/>
    <property type="match status" value="1"/>
</dbReference>
<dbReference type="FunFam" id="3.30.40.10:FF:000009">
    <property type="entry name" value="E3 ubiquitin-protein ligase RNF130"/>
    <property type="match status" value="1"/>
</dbReference>
<dbReference type="FunFam" id="3.50.30.30:FF:000016">
    <property type="entry name" value="Ring finger protein 150"/>
    <property type="match status" value="1"/>
</dbReference>
<dbReference type="Gene3D" id="3.50.30.30">
    <property type="match status" value="1"/>
</dbReference>
<dbReference type="Gene3D" id="3.30.40.10">
    <property type="entry name" value="Zinc/RING finger domain, C3HC4 (zinc finger)"/>
    <property type="match status" value="1"/>
</dbReference>
<dbReference type="InterPro" id="IPR046450">
    <property type="entry name" value="PA_dom_sf"/>
</dbReference>
<dbReference type="InterPro" id="IPR003137">
    <property type="entry name" value="PA_domain"/>
</dbReference>
<dbReference type="InterPro" id="IPR001841">
    <property type="entry name" value="Znf_RING"/>
</dbReference>
<dbReference type="InterPro" id="IPR013083">
    <property type="entry name" value="Znf_RING/FYVE/PHD"/>
</dbReference>
<dbReference type="PANTHER" id="PTHR46539">
    <property type="entry name" value="E3 UBIQUITIN-PROTEIN LIGASE ATL42"/>
    <property type="match status" value="1"/>
</dbReference>
<dbReference type="PANTHER" id="PTHR46539:SF27">
    <property type="entry name" value="RING FINGER PROTEIN 128"/>
    <property type="match status" value="1"/>
</dbReference>
<dbReference type="Pfam" id="PF02225">
    <property type="entry name" value="PA"/>
    <property type="match status" value="1"/>
</dbReference>
<dbReference type="Pfam" id="PF13639">
    <property type="entry name" value="zf-RING_2"/>
    <property type="match status" value="1"/>
</dbReference>
<dbReference type="SMART" id="SM00184">
    <property type="entry name" value="RING"/>
    <property type="match status" value="1"/>
</dbReference>
<dbReference type="SUPFAM" id="SSF52025">
    <property type="entry name" value="PA domain"/>
    <property type="match status" value="1"/>
</dbReference>
<dbReference type="SUPFAM" id="SSF57850">
    <property type="entry name" value="RING/U-box"/>
    <property type="match status" value="1"/>
</dbReference>
<dbReference type="PROSITE" id="PS50089">
    <property type="entry name" value="ZF_RING_2"/>
    <property type="match status" value="1"/>
</dbReference>
<accession>Q5DTZ6</accession>
<feature type="signal peptide" evidence="1">
    <location>
        <begin position="1"/>
        <end position="34"/>
    </location>
</feature>
<feature type="chain" id="PRO_0000280698" description="RING finger protein 150">
    <location>
        <begin position="35"/>
        <end position="437"/>
    </location>
</feature>
<feature type="topological domain" description="Extracellular" evidence="1">
    <location>
        <begin position="35"/>
        <end position="207"/>
    </location>
</feature>
<feature type="transmembrane region" description="Helical" evidence="1">
    <location>
        <begin position="208"/>
        <end position="228"/>
    </location>
</feature>
<feature type="topological domain" description="Cytoplasmic" evidence="1">
    <location>
        <begin position="229"/>
        <end position="437"/>
    </location>
</feature>
<feature type="domain" description="PA">
    <location>
        <begin position="80"/>
        <end position="182"/>
    </location>
</feature>
<feature type="zinc finger region" description="RING-type; atypical" evidence="2">
    <location>
        <begin position="277"/>
        <end position="318"/>
    </location>
</feature>
<feature type="glycosylation site" description="N-linked (GlcNAc...) asparagine" evidence="1">
    <location>
        <position position="45"/>
    </location>
</feature>
<feature type="glycosylation site" description="N-linked (GlcNAc...) asparagine" evidence="1">
    <location>
        <position position="124"/>
    </location>
</feature>
<feature type="glycosylation site" description="N-linked (GlcNAc...) asparagine" evidence="1">
    <location>
        <position position="152"/>
    </location>
</feature>
<feature type="glycosylation site" description="N-linked (GlcNAc...) asparagine" evidence="1">
    <location>
        <position position="185"/>
    </location>
</feature>
<feature type="splice variant" id="VSP_023848" description="In isoform 2." evidence="3">
    <location>
        <begin position="1"/>
        <end position="90"/>
    </location>
</feature>
<feature type="splice variant" id="VSP_023849" description="In isoform 3." evidence="4">
    <original>RRLGDAAKKAISKLQVRTIRKGDKETESDFDNCAVCIEGYKP</original>
    <variation>VSSSLRKAWLCKLSANHTCQGINVVAHKSRDSKCLLTPPHTC</variation>
    <location>
        <begin position="245"/>
        <end position="286"/>
    </location>
</feature>
<feature type="splice variant" id="VSP_023850" description="In isoform 3." evidence="4">
    <location>
        <begin position="287"/>
        <end position="437"/>
    </location>
</feature>
<feature type="sequence conflict" description="In Ref. 1; BAD90433." evidence="5" ref="1">
    <original>A</original>
    <variation>V</variation>
    <location>
        <position position="108"/>
    </location>
</feature>
<feature type="sequence conflict" description="In Ref. 2; AK041412." evidence="5" ref="2">
    <original>E</original>
    <variation>K</variation>
    <location>
        <position position="342"/>
    </location>
</feature>
<reference key="1">
    <citation type="submission" date="2005-02" db="EMBL/GenBank/DDBJ databases">
        <title>Prediction of the coding sequences of mouse homologues of KIAA gene. The complete nucleotide sequences of mouse KIAA-homologous cDNAs identified by screening of terminal sequences of cDNA clones randomly sampled from size-fractionated libraries.</title>
        <authorList>
            <person name="Okazaki N."/>
            <person name="Kikuno R.F."/>
            <person name="Ohara R."/>
            <person name="Inamoto S."/>
            <person name="Nagase T."/>
            <person name="Ohara O."/>
            <person name="Koga H."/>
        </authorList>
    </citation>
    <scope>NUCLEOTIDE SEQUENCE [LARGE SCALE MRNA] (ISOFORM 3)</scope>
    <source>
        <tissue>Brain</tissue>
    </source>
</reference>
<reference key="2">
    <citation type="journal article" date="2005" name="Science">
        <title>The transcriptional landscape of the mammalian genome.</title>
        <authorList>
            <person name="Carninci P."/>
            <person name="Kasukawa T."/>
            <person name="Katayama S."/>
            <person name="Gough J."/>
            <person name="Frith M.C."/>
            <person name="Maeda N."/>
            <person name="Oyama R."/>
            <person name="Ravasi T."/>
            <person name="Lenhard B."/>
            <person name="Wells C."/>
            <person name="Kodzius R."/>
            <person name="Shimokawa K."/>
            <person name="Bajic V.B."/>
            <person name="Brenner S.E."/>
            <person name="Batalov S."/>
            <person name="Forrest A.R."/>
            <person name="Zavolan M."/>
            <person name="Davis M.J."/>
            <person name="Wilming L.G."/>
            <person name="Aidinis V."/>
            <person name="Allen J.E."/>
            <person name="Ambesi-Impiombato A."/>
            <person name="Apweiler R."/>
            <person name="Aturaliya R.N."/>
            <person name="Bailey T.L."/>
            <person name="Bansal M."/>
            <person name="Baxter L."/>
            <person name="Beisel K.W."/>
            <person name="Bersano T."/>
            <person name="Bono H."/>
            <person name="Chalk A.M."/>
            <person name="Chiu K.P."/>
            <person name="Choudhary V."/>
            <person name="Christoffels A."/>
            <person name="Clutterbuck D.R."/>
            <person name="Crowe M.L."/>
            <person name="Dalla E."/>
            <person name="Dalrymple B.P."/>
            <person name="de Bono B."/>
            <person name="Della Gatta G."/>
            <person name="di Bernardo D."/>
            <person name="Down T."/>
            <person name="Engstrom P."/>
            <person name="Fagiolini M."/>
            <person name="Faulkner G."/>
            <person name="Fletcher C.F."/>
            <person name="Fukushima T."/>
            <person name="Furuno M."/>
            <person name="Futaki S."/>
            <person name="Gariboldi M."/>
            <person name="Georgii-Hemming P."/>
            <person name="Gingeras T.R."/>
            <person name="Gojobori T."/>
            <person name="Green R.E."/>
            <person name="Gustincich S."/>
            <person name="Harbers M."/>
            <person name="Hayashi Y."/>
            <person name="Hensch T.K."/>
            <person name="Hirokawa N."/>
            <person name="Hill D."/>
            <person name="Huminiecki L."/>
            <person name="Iacono M."/>
            <person name="Ikeo K."/>
            <person name="Iwama A."/>
            <person name="Ishikawa T."/>
            <person name="Jakt M."/>
            <person name="Kanapin A."/>
            <person name="Katoh M."/>
            <person name="Kawasawa Y."/>
            <person name="Kelso J."/>
            <person name="Kitamura H."/>
            <person name="Kitano H."/>
            <person name="Kollias G."/>
            <person name="Krishnan S.P."/>
            <person name="Kruger A."/>
            <person name="Kummerfeld S.K."/>
            <person name="Kurochkin I.V."/>
            <person name="Lareau L.F."/>
            <person name="Lazarevic D."/>
            <person name="Lipovich L."/>
            <person name="Liu J."/>
            <person name="Liuni S."/>
            <person name="McWilliam S."/>
            <person name="Madan Babu M."/>
            <person name="Madera M."/>
            <person name="Marchionni L."/>
            <person name="Matsuda H."/>
            <person name="Matsuzawa S."/>
            <person name="Miki H."/>
            <person name="Mignone F."/>
            <person name="Miyake S."/>
            <person name="Morris K."/>
            <person name="Mottagui-Tabar S."/>
            <person name="Mulder N."/>
            <person name="Nakano N."/>
            <person name="Nakauchi H."/>
            <person name="Ng P."/>
            <person name="Nilsson R."/>
            <person name="Nishiguchi S."/>
            <person name="Nishikawa S."/>
            <person name="Nori F."/>
            <person name="Ohara O."/>
            <person name="Okazaki Y."/>
            <person name="Orlando V."/>
            <person name="Pang K.C."/>
            <person name="Pavan W.J."/>
            <person name="Pavesi G."/>
            <person name="Pesole G."/>
            <person name="Petrovsky N."/>
            <person name="Piazza S."/>
            <person name="Reed J."/>
            <person name="Reid J.F."/>
            <person name="Ring B.Z."/>
            <person name="Ringwald M."/>
            <person name="Rost B."/>
            <person name="Ruan Y."/>
            <person name="Salzberg S.L."/>
            <person name="Sandelin A."/>
            <person name="Schneider C."/>
            <person name="Schoenbach C."/>
            <person name="Sekiguchi K."/>
            <person name="Semple C.A."/>
            <person name="Seno S."/>
            <person name="Sessa L."/>
            <person name="Sheng Y."/>
            <person name="Shibata Y."/>
            <person name="Shimada H."/>
            <person name="Shimada K."/>
            <person name="Silva D."/>
            <person name="Sinclair B."/>
            <person name="Sperling S."/>
            <person name="Stupka E."/>
            <person name="Sugiura K."/>
            <person name="Sultana R."/>
            <person name="Takenaka Y."/>
            <person name="Taki K."/>
            <person name="Tammoja K."/>
            <person name="Tan S.L."/>
            <person name="Tang S."/>
            <person name="Taylor M.S."/>
            <person name="Tegner J."/>
            <person name="Teichmann S.A."/>
            <person name="Ueda H.R."/>
            <person name="van Nimwegen E."/>
            <person name="Verardo R."/>
            <person name="Wei C.L."/>
            <person name="Yagi K."/>
            <person name="Yamanishi H."/>
            <person name="Zabarovsky E."/>
            <person name="Zhu S."/>
            <person name="Zimmer A."/>
            <person name="Hide W."/>
            <person name="Bult C."/>
            <person name="Grimmond S.M."/>
            <person name="Teasdale R.D."/>
            <person name="Liu E.T."/>
            <person name="Brusic V."/>
            <person name="Quackenbush J."/>
            <person name="Wahlestedt C."/>
            <person name="Mattick J.S."/>
            <person name="Hume D.A."/>
            <person name="Kai C."/>
            <person name="Sasaki D."/>
            <person name="Tomaru Y."/>
            <person name="Fukuda S."/>
            <person name="Kanamori-Katayama M."/>
            <person name="Suzuki M."/>
            <person name="Aoki J."/>
            <person name="Arakawa T."/>
            <person name="Iida J."/>
            <person name="Imamura K."/>
            <person name="Itoh M."/>
            <person name="Kato T."/>
            <person name="Kawaji H."/>
            <person name="Kawagashira N."/>
            <person name="Kawashima T."/>
            <person name="Kojima M."/>
            <person name="Kondo S."/>
            <person name="Konno H."/>
            <person name="Nakano K."/>
            <person name="Ninomiya N."/>
            <person name="Nishio T."/>
            <person name="Okada M."/>
            <person name="Plessy C."/>
            <person name="Shibata K."/>
            <person name="Shiraki T."/>
            <person name="Suzuki S."/>
            <person name="Tagami M."/>
            <person name="Waki K."/>
            <person name="Watahiki A."/>
            <person name="Okamura-Oho Y."/>
            <person name="Suzuki H."/>
            <person name="Kawai J."/>
            <person name="Hayashizaki Y."/>
        </authorList>
    </citation>
    <scope>NUCLEOTIDE SEQUENCE [LARGE SCALE MRNA] (ISOFORM 2)</scope>
    <source>
        <strain>NOD</strain>
    </source>
</reference>
<reference key="3">
    <citation type="journal article" date="2009" name="PLoS Biol.">
        <title>Lineage-specific biology revealed by a finished genome assembly of the mouse.</title>
        <authorList>
            <person name="Church D.M."/>
            <person name="Goodstadt L."/>
            <person name="Hillier L.W."/>
            <person name="Zody M.C."/>
            <person name="Goldstein S."/>
            <person name="She X."/>
            <person name="Bult C.J."/>
            <person name="Agarwala R."/>
            <person name="Cherry J.L."/>
            <person name="DiCuccio M."/>
            <person name="Hlavina W."/>
            <person name="Kapustin Y."/>
            <person name="Meric P."/>
            <person name="Maglott D."/>
            <person name="Birtle Z."/>
            <person name="Marques A.C."/>
            <person name="Graves T."/>
            <person name="Zhou S."/>
            <person name="Teague B."/>
            <person name="Potamousis K."/>
            <person name="Churas C."/>
            <person name="Place M."/>
            <person name="Herschleb J."/>
            <person name="Runnheim R."/>
            <person name="Forrest D."/>
            <person name="Amos-Landgraf J."/>
            <person name="Schwartz D.C."/>
            <person name="Cheng Z."/>
            <person name="Lindblad-Toh K."/>
            <person name="Eichler E.E."/>
            <person name="Ponting C.P."/>
        </authorList>
    </citation>
    <scope>NUCLEOTIDE SEQUENCE [LARGE SCALE GENOMIC DNA]</scope>
    <source>
        <strain>C57BL/6J</strain>
    </source>
</reference>
<organism>
    <name type="scientific">Mus musculus</name>
    <name type="common">Mouse</name>
    <dbReference type="NCBI Taxonomy" id="10090"/>
    <lineage>
        <taxon>Eukaryota</taxon>
        <taxon>Metazoa</taxon>
        <taxon>Chordata</taxon>
        <taxon>Craniata</taxon>
        <taxon>Vertebrata</taxon>
        <taxon>Euteleostomi</taxon>
        <taxon>Mammalia</taxon>
        <taxon>Eutheria</taxon>
        <taxon>Euarchontoglires</taxon>
        <taxon>Glires</taxon>
        <taxon>Rodentia</taxon>
        <taxon>Myomorpha</taxon>
        <taxon>Muroidea</taxon>
        <taxon>Muridae</taxon>
        <taxon>Murinae</taxon>
        <taxon>Mus</taxon>
        <taxon>Mus</taxon>
    </lineage>
</organism>
<comment type="subcellular location">
    <subcellularLocation>
        <location evidence="5">Membrane</location>
        <topology evidence="5">Single-pass type I membrane protein</topology>
    </subcellularLocation>
</comment>
<comment type="alternative products">
    <event type="alternative splicing"/>
    <isoform>
        <id>Q5DTZ6-1</id>
        <name>1</name>
        <sequence type="displayed"/>
    </isoform>
    <isoform>
        <id>Q5DTZ6-2</id>
        <name>2</name>
        <sequence type="described" ref="VSP_023848"/>
    </isoform>
    <isoform>
        <id>Q5DTZ6-3</id>
        <name>3</name>
        <sequence type="described" ref="VSP_023849 VSP_023850"/>
    </isoform>
</comment>
<comment type="sequence caution" evidence="5">
    <conflict type="erroneous initiation">
        <sequence resource="EMBL-CDS" id="BAD90433"/>
    </conflict>
</comment>
<keyword id="KW-0025">Alternative splicing</keyword>
<keyword id="KW-0325">Glycoprotein</keyword>
<keyword id="KW-0472">Membrane</keyword>
<keyword id="KW-0479">Metal-binding</keyword>
<keyword id="KW-1185">Reference proteome</keyword>
<keyword id="KW-0732">Signal</keyword>
<keyword id="KW-0812">Transmembrane</keyword>
<keyword id="KW-1133">Transmembrane helix</keyword>
<keyword id="KW-0862">Zinc</keyword>
<keyword id="KW-0863">Zinc-finger</keyword>
<evidence type="ECO:0000255" key="1"/>
<evidence type="ECO:0000255" key="2">
    <source>
        <dbReference type="PROSITE-ProRule" id="PRU00175"/>
    </source>
</evidence>
<evidence type="ECO:0000303" key="3">
    <source>
    </source>
</evidence>
<evidence type="ECO:0000303" key="4">
    <source ref="1"/>
</evidence>
<evidence type="ECO:0000305" key="5"/>
<sequence>MTMSLIQACRSLALSTWLLSFCFVHLLCLDFTVAEKEEWYTAFVNITYLEPEPGAAVAGSGGGAELHTEKSECGRYGEHSPKQDARGEVVMASSAQDRLACDPNTKFAAPAHGKHWIALIPKGNCTYRDKIRNAFLQNASAVVIFNVGSNTNETITMPHAGVEDIVAIMIPEPKGKEIVSLLERNITVTMYITIGTRNLQKYVSRTSVVFVSISFIVLMIISLAWLVFYYIQRFRYANARDRNQRRLGDAAKKAISKLQVRTIRKGDKETESDFDNCAVCIEGYKPNDVVRILPCRHLFHKSCVDPWLLDHRTCPMCKMNILKALGIPPNADCMDDLPIDFEGSLGGPPTNQITGASDTTVNESSVTLDPAVRTVGALQVVQDPDPAPQEGEAIFTTNSGQEPALSSDSDISLIMALEVGLSDVELSTDQDCEEVKS</sequence>
<protein>
    <recommendedName>
        <fullName>RING finger protein 150</fullName>
    </recommendedName>
</protein>
<gene>
    <name type="primary">Rnf150</name>
    <name type="synonym">Kiaa1214</name>
</gene>
<proteinExistence type="evidence at transcript level"/>